<gene>
    <name type="ordered locus">At5g17580</name>
    <name type="ORF">K10A8_60</name>
</gene>
<sequence>MSASYVSDLHINVKGVPFHLCKEMLAKRSSKVSSLLERNEIDELRLILRDLEVDPETFELVARFCNGSEFKFTSDTIVSVLCIAYYLGMNEEQSSNNLLGKASEFLEHRVFPSWSETINALRSGDKSFDKLADVGLVDVFFDSLIEKASYDPRLLGELIKNRAETDDYRPNPRRRLFVIDWKSEDLITIPLRLYEPFMIRAIKSRSIPVEYIVLSVCKYAKKWVFDTEESLSGQKREAIEVVERLLPYQRGLISCELLFESLKHSIWLEASSECQNGFMIRICKQLDMAKSTDLKILSRGYGEKAEGFENIELVKTVVKSFYTYYANEDSETVSHFVKVAKLSEEFLFLAASEASLKLEAFVELAEMTVAVSQGILSYSDGIYRAIDVFLESHRYLTESEKMEVCKVLECGKLSQEGFERAAKNQKLPLRIVVNVLCVSQLQIRDTVAKEIKGMEEKVDEEEEEEIEVSSDEDEMEKMSNKLLGLEIENDECVVHRRKNMKKKKKKISVWGQVKRKFGCLNSSSSSYSVDACTCDVKKKKKKIHHHYE</sequence>
<comment type="function">
    <text evidence="1">May act as a substrate-specific adapter of an E3 ubiquitin-protein ligase complex (CUL3-RBX1-BTB) which mediates the ubiquitination and subsequent proteasomal degradation of target proteins.</text>
</comment>
<comment type="pathway">
    <text>Protein modification; protein ubiquitination.</text>
</comment>
<comment type="domain">
    <text evidence="6">The BTB/POZ domain mediates the interaction with some component of ubiquitin ligase complexes.</text>
</comment>
<comment type="similarity">
    <text evidence="5">Belongs to the NPH3 family.</text>
</comment>
<feature type="chain" id="PRO_0000409584" description="BTB/POZ domain-containing protein At5g17580">
    <location>
        <begin position="1"/>
        <end position="548"/>
    </location>
</feature>
<feature type="domain" description="BTB" evidence="4">
    <location>
        <begin position="7"/>
        <end position="74"/>
    </location>
</feature>
<feature type="domain" description="NPH3" evidence="5">
    <location>
        <begin position="180"/>
        <end position="442"/>
    </location>
</feature>
<feature type="coiled-coil region" evidence="3">
    <location>
        <begin position="442"/>
        <end position="493"/>
    </location>
</feature>
<feature type="modified residue" description="Phosphotyrosine" evidence="2">
    <location>
        <position position="383"/>
    </location>
</feature>
<proteinExistence type="evidence at transcript level"/>
<keyword id="KW-0175">Coiled coil</keyword>
<keyword id="KW-0597">Phosphoprotein</keyword>
<keyword id="KW-1185">Reference proteome</keyword>
<keyword id="KW-0833">Ubl conjugation pathway</keyword>
<accession>Q9LF66</accession>
<evidence type="ECO:0000250" key="1"/>
<evidence type="ECO:0000250" key="2">
    <source>
        <dbReference type="UniProtKB" id="Q9FMF5"/>
    </source>
</evidence>
<evidence type="ECO:0000255" key="3"/>
<evidence type="ECO:0000255" key="4">
    <source>
        <dbReference type="PROSITE-ProRule" id="PRU00037"/>
    </source>
</evidence>
<evidence type="ECO:0000255" key="5">
    <source>
        <dbReference type="PROSITE-ProRule" id="PRU00982"/>
    </source>
</evidence>
<evidence type="ECO:0000269" key="6">
    <source>
    </source>
</evidence>
<reference key="1">
    <citation type="journal article" date="2000" name="Nature">
        <title>Sequence and analysis of chromosome 5 of the plant Arabidopsis thaliana.</title>
        <authorList>
            <person name="Tabata S."/>
            <person name="Kaneko T."/>
            <person name="Nakamura Y."/>
            <person name="Kotani H."/>
            <person name="Kato T."/>
            <person name="Asamizu E."/>
            <person name="Miyajima N."/>
            <person name="Sasamoto S."/>
            <person name="Kimura T."/>
            <person name="Hosouchi T."/>
            <person name="Kawashima K."/>
            <person name="Kohara M."/>
            <person name="Matsumoto M."/>
            <person name="Matsuno A."/>
            <person name="Muraki A."/>
            <person name="Nakayama S."/>
            <person name="Nakazaki N."/>
            <person name="Naruo K."/>
            <person name="Okumura S."/>
            <person name="Shinpo S."/>
            <person name="Takeuchi C."/>
            <person name="Wada T."/>
            <person name="Watanabe A."/>
            <person name="Yamada M."/>
            <person name="Yasuda M."/>
            <person name="Sato S."/>
            <person name="de la Bastide M."/>
            <person name="Huang E."/>
            <person name="Spiegel L."/>
            <person name="Gnoj L."/>
            <person name="O'Shaughnessy A."/>
            <person name="Preston R."/>
            <person name="Habermann K."/>
            <person name="Murray J."/>
            <person name="Johnson D."/>
            <person name="Rohlfing T."/>
            <person name="Nelson J."/>
            <person name="Stoneking T."/>
            <person name="Pepin K."/>
            <person name="Spieth J."/>
            <person name="Sekhon M."/>
            <person name="Armstrong J."/>
            <person name="Becker M."/>
            <person name="Belter E."/>
            <person name="Cordum H."/>
            <person name="Cordes M."/>
            <person name="Courtney L."/>
            <person name="Courtney W."/>
            <person name="Dante M."/>
            <person name="Du H."/>
            <person name="Edwards J."/>
            <person name="Fryman J."/>
            <person name="Haakensen B."/>
            <person name="Lamar E."/>
            <person name="Latreille P."/>
            <person name="Leonard S."/>
            <person name="Meyer R."/>
            <person name="Mulvaney E."/>
            <person name="Ozersky P."/>
            <person name="Riley A."/>
            <person name="Strowmatt C."/>
            <person name="Wagner-McPherson C."/>
            <person name="Wollam A."/>
            <person name="Yoakum M."/>
            <person name="Bell M."/>
            <person name="Dedhia N."/>
            <person name="Parnell L."/>
            <person name="Shah R."/>
            <person name="Rodriguez M."/>
            <person name="Hoon See L."/>
            <person name="Vil D."/>
            <person name="Baker J."/>
            <person name="Kirchoff K."/>
            <person name="Toth K."/>
            <person name="King L."/>
            <person name="Bahret A."/>
            <person name="Miller B."/>
            <person name="Marra M.A."/>
            <person name="Martienssen R."/>
            <person name="McCombie W.R."/>
            <person name="Wilson R.K."/>
            <person name="Murphy G."/>
            <person name="Bancroft I."/>
            <person name="Volckaert G."/>
            <person name="Wambutt R."/>
            <person name="Duesterhoeft A."/>
            <person name="Stiekema W."/>
            <person name="Pohl T."/>
            <person name="Entian K.-D."/>
            <person name="Terryn N."/>
            <person name="Hartley N."/>
            <person name="Bent E."/>
            <person name="Johnson S."/>
            <person name="Langham S.-A."/>
            <person name="McCullagh B."/>
            <person name="Robben J."/>
            <person name="Grymonprez B."/>
            <person name="Zimmermann W."/>
            <person name="Ramsperger U."/>
            <person name="Wedler H."/>
            <person name="Balke K."/>
            <person name="Wedler E."/>
            <person name="Peters S."/>
            <person name="van Staveren M."/>
            <person name="Dirkse W."/>
            <person name="Mooijman P."/>
            <person name="Klein Lankhorst R."/>
            <person name="Weitzenegger T."/>
            <person name="Bothe G."/>
            <person name="Rose M."/>
            <person name="Hauf J."/>
            <person name="Berneiser S."/>
            <person name="Hempel S."/>
            <person name="Feldpausch M."/>
            <person name="Lamberth S."/>
            <person name="Villarroel R."/>
            <person name="Gielen J."/>
            <person name="Ardiles W."/>
            <person name="Bents O."/>
            <person name="Lemcke K."/>
            <person name="Kolesov G."/>
            <person name="Mayer K.F.X."/>
            <person name="Rudd S."/>
            <person name="Schoof H."/>
            <person name="Schueller C."/>
            <person name="Zaccaria P."/>
            <person name="Mewes H.-W."/>
            <person name="Bevan M."/>
            <person name="Fransz P.F."/>
        </authorList>
    </citation>
    <scope>NUCLEOTIDE SEQUENCE [LARGE SCALE GENOMIC DNA]</scope>
    <source>
        <strain>cv. Columbia</strain>
    </source>
</reference>
<reference key="2">
    <citation type="journal article" date="2017" name="Plant J.">
        <title>Araport11: a complete reannotation of the Arabidopsis thaliana reference genome.</title>
        <authorList>
            <person name="Cheng C.Y."/>
            <person name="Krishnakumar V."/>
            <person name="Chan A.P."/>
            <person name="Thibaud-Nissen F."/>
            <person name="Schobel S."/>
            <person name="Town C.D."/>
        </authorList>
    </citation>
    <scope>GENOME REANNOTATION</scope>
    <source>
        <strain>cv. Columbia</strain>
    </source>
</reference>
<reference key="3">
    <citation type="journal article" date="2005" name="J. Biol. Chem.">
        <title>Cullins 3a and 3b assemble with members of the broad complex/tramtrack/bric-a-brac (BTB) protein family to form essential ubiquitin-protein ligases (E3s) in Arabidopsis.</title>
        <authorList>
            <person name="Gingerich D.J."/>
            <person name="Gagne J.M."/>
            <person name="Salter D.W."/>
            <person name="Hellmann H."/>
            <person name="Estelle M."/>
            <person name="Ma L."/>
            <person name="Vierstra R.D."/>
        </authorList>
    </citation>
    <scope>DOMAIN BTB</scope>
</reference>
<organism>
    <name type="scientific">Arabidopsis thaliana</name>
    <name type="common">Mouse-ear cress</name>
    <dbReference type="NCBI Taxonomy" id="3702"/>
    <lineage>
        <taxon>Eukaryota</taxon>
        <taxon>Viridiplantae</taxon>
        <taxon>Streptophyta</taxon>
        <taxon>Embryophyta</taxon>
        <taxon>Tracheophyta</taxon>
        <taxon>Spermatophyta</taxon>
        <taxon>Magnoliopsida</taxon>
        <taxon>eudicotyledons</taxon>
        <taxon>Gunneridae</taxon>
        <taxon>Pentapetalae</taxon>
        <taxon>rosids</taxon>
        <taxon>malvids</taxon>
        <taxon>Brassicales</taxon>
        <taxon>Brassicaceae</taxon>
        <taxon>Camelineae</taxon>
        <taxon>Arabidopsis</taxon>
    </lineage>
</organism>
<name>Y5758_ARATH</name>
<dbReference type="EMBL" id="AL391151">
    <property type="protein sequence ID" value="CAC01902.1"/>
    <property type="molecule type" value="Genomic_DNA"/>
</dbReference>
<dbReference type="EMBL" id="CP002688">
    <property type="protein sequence ID" value="AED92445.1"/>
    <property type="molecule type" value="Genomic_DNA"/>
</dbReference>
<dbReference type="PIR" id="T51462">
    <property type="entry name" value="T51462"/>
</dbReference>
<dbReference type="RefSeq" id="NP_197260.1">
    <property type="nucleotide sequence ID" value="NM_121764.2"/>
</dbReference>
<dbReference type="SMR" id="Q9LF66"/>
<dbReference type="FunCoup" id="Q9LF66">
    <property type="interactions" value="153"/>
</dbReference>
<dbReference type="PaxDb" id="3702-AT5G17580.1"/>
<dbReference type="ProteomicsDB" id="242840"/>
<dbReference type="EnsemblPlants" id="AT5G17580.1">
    <property type="protein sequence ID" value="AT5G17580.1"/>
    <property type="gene ID" value="AT5G17580"/>
</dbReference>
<dbReference type="GeneID" id="831624"/>
<dbReference type="Gramene" id="AT5G17580.1">
    <property type="protein sequence ID" value="AT5G17580.1"/>
    <property type="gene ID" value="AT5G17580"/>
</dbReference>
<dbReference type="KEGG" id="ath:AT5G17580"/>
<dbReference type="Araport" id="AT5G17580"/>
<dbReference type="TAIR" id="AT5G17580"/>
<dbReference type="eggNOG" id="ENOG502QQV1">
    <property type="taxonomic scope" value="Eukaryota"/>
</dbReference>
<dbReference type="HOGENOM" id="CLU_005994_6_2_1"/>
<dbReference type="InParanoid" id="Q9LF66"/>
<dbReference type="OMA" id="YAKKWVL"/>
<dbReference type="PhylomeDB" id="Q9LF66"/>
<dbReference type="UniPathway" id="UPA00143"/>
<dbReference type="PRO" id="PR:Q9LF66"/>
<dbReference type="Proteomes" id="UP000006548">
    <property type="component" value="Chromosome 5"/>
</dbReference>
<dbReference type="ExpressionAtlas" id="Q9LF66">
    <property type="expression patterns" value="baseline and differential"/>
</dbReference>
<dbReference type="GO" id="GO:0016567">
    <property type="term" value="P:protein ubiquitination"/>
    <property type="evidence" value="ECO:0007669"/>
    <property type="project" value="UniProtKB-UniPathway"/>
</dbReference>
<dbReference type="Gene3D" id="3.30.710.10">
    <property type="entry name" value="Potassium Channel Kv1.1, Chain A"/>
    <property type="match status" value="1"/>
</dbReference>
<dbReference type="InterPro" id="IPR000210">
    <property type="entry name" value="BTB/POZ_dom"/>
</dbReference>
<dbReference type="InterPro" id="IPR043454">
    <property type="entry name" value="NPH3/RPT2-like"/>
</dbReference>
<dbReference type="InterPro" id="IPR027356">
    <property type="entry name" value="NPH3_dom"/>
</dbReference>
<dbReference type="InterPro" id="IPR011333">
    <property type="entry name" value="SKP1/BTB/POZ_sf"/>
</dbReference>
<dbReference type="PANTHER" id="PTHR32370">
    <property type="entry name" value="OS12G0117600 PROTEIN"/>
    <property type="match status" value="1"/>
</dbReference>
<dbReference type="Pfam" id="PF00651">
    <property type="entry name" value="BTB"/>
    <property type="match status" value="1"/>
</dbReference>
<dbReference type="Pfam" id="PF03000">
    <property type="entry name" value="NPH3"/>
    <property type="match status" value="1"/>
</dbReference>
<dbReference type="SMART" id="SM00225">
    <property type="entry name" value="BTB"/>
    <property type="match status" value="1"/>
</dbReference>
<dbReference type="SUPFAM" id="SSF54695">
    <property type="entry name" value="POZ domain"/>
    <property type="match status" value="1"/>
</dbReference>
<dbReference type="PROSITE" id="PS50097">
    <property type="entry name" value="BTB"/>
    <property type="match status" value="1"/>
</dbReference>
<dbReference type="PROSITE" id="PS51649">
    <property type="entry name" value="NPH3"/>
    <property type="match status" value="1"/>
</dbReference>
<protein>
    <recommendedName>
        <fullName>BTB/POZ domain-containing protein At5g17580</fullName>
    </recommendedName>
</protein>